<proteinExistence type="evidence at transcript level"/>
<comment type="function">
    <text evidence="2 3">Key component of innate and adaptive immunity. TLRs (Toll-like receptors) control host immune response against pathogens through recognition of molecular patterns specific to microorganisms. TLR9 is a nucleotide-sensing TLR which is activated by unmethylated cytidine-phosphate-guanosine (CpG) dinucleotides. Acts via MYD88 and TRAF6, leading to NF-kappa-B activation, cytokine secretion and the inflammatory response. Upon CpG stimulation, induces B-cell proliferation, activation, survival and antibody production (By similarity).</text>
</comment>
<comment type="subunit">
    <text evidence="1 2 3">Monomer and homodimer. Exists as a monomer in the absence of unmethylated cytidine-phosphate-guanosine (CpG) ligand. Proteolytic processing of an insertion loop (Z-loop) is required for homodimerization upon binding to the unmethylated CpG ligand leading to its activation (By similarity). Interacts with MYD88 via their respective TIR domains (By similarity). Interacts with BTK (By similarity). Interacts (via transmembrane domain) with UNC93B1. Interacts with CD300LH; the interaction may promote full activation of TLR9-triggered innate responses. Interacts with CNPY3 and HSP90B1; this interaction is required for proper folding in the endoplasmic reticulum. Interacts with SMPDL3B (By similarity). Interacts with CD82; this interaction is essential for TLR9-dependent myddosome formation in response to CpG stimulation (By similarity).</text>
</comment>
<comment type="subcellular location">
    <subcellularLocation>
        <location evidence="2">Endoplasmic reticulum membrane</location>
        <topology evidence="2">Single-pass type I membrane protein</topology>
    </subcellularLocation>
    <subcellularLocation>
        <location evidence="2">Endosome</location>
    </subcellularLocation>
    <subcellularLocation>
        <location evidence="2">Lysosome</location>
    </subcellularLocation>
    <subcellularLocation>
        <location evidence="2">Cytoplasmic vesicle</location>
        <location evidence="2">Phagosome</location>
    </subcellularLocation>
    <text evidence="2">Relocalizes from endoplasmic reticulum to endosome and lysosome upon stimulation with agonist. Exit from the ER requires UNC93B1. Endolysosomal localization is required for proteolytic cleavage and subsequent activation. Intracellular localization of the active receptor may prevent from responding to self nucleic acid.</text>
</comment>
<comment type="PTM">
    <text evidence="2">Activated by proteolytic cleavage of the flexible loop between repeats LRR14 and LRR15 within the ectodomain. Cleavage requires UNC93B1. Proteolytically processed by first removing the majority of the ectodomain by either asparagine endopeptidase (AEP) or a cathepsin followed by a trimming event that is solely cathepsin mediated and required for optimal receptor signaling.</text>
</comment>
<comment type="PTM">
    <text evidence="3">Palmitoylated by ZDHHC3 in the Golgi regulates TLR9 trafficking from the Golgi to endosomes. Depalmitoylation by PPT1 controls the release of TLR9 from UNC93B1 in endosomes.</text>
</comment>
<comment type="similarity">
    <text evidence="6">Belongs to the Toll-like receptor family.</text>
</comment>
<keyword id="KW-0968">Cytoplasmic vesicle</keyword>
<keyword id="KW-1015">Disulfide bond</keyword>
<keyword id="KW-0256">Endoplasmic reticulum</keyword>
<keyword id="KW-0967">Endosome</keyword>
<keyword id="KW-0325">Glycoprotein</keyword>
<keyword id="KW-0391">Immunity</keyword>
<keyword id="KW-0395">Inflammatory response</keyword>
<keyword id="KW-0399">Innate immunity</keyword>
<keyword id="KW-0433">Leucine-rich repeat</keyword>
<keyword id="KW-0449">Lipoprotein</keyword>
<keyword id="KW-0458">Lysosome</keyword>
<keyword id="KW-0472">Membrane</keyword>
<keyword id="KW-0564">Palmitate</keyword>
<keyword id="KW-0675">Receptor</keyword>
<keyword id="KW-1185">Reference proteome</keyword>
<keyword id="KW-0677">Repeat</keyword>
<keyword id="KW-0732">Signal</keyword>
<keyword id="KW-0812">Transmembrane</keyword>
<keyword id="KW-1133">Transmembrane helix</keyword>
<organism>
    <name type="scientific">Sus scrofa</name>
    <name type="common">Pig</name>
    <dbReference type="NCBI Taxonomy" id="9823"/>
    <lineage>
        <taxon>Eukaryota</taxon>
        <taxon>Metazoa</taxon>
        <taxon>Chordata</taxon>
        <taxon>Craniata</taxon>
        <taxon>Vertebrata</taxon>
        <taxon>Euteleostomi</taxon>
        <taxon>Mammalia</taxon>
        <taxon>Eutheria</taxon>
        <taxon>Laurasiatheria</taxon>
        <taxon>Artiodactyla</taxon>
        <taxon>Suina</taxon>
        <taxon>Suidae</taxon>
        <taxon>Sus</taxon>
    </lineage>
</organism>
<protein>
    <recommendedName>
        <fullName>Toll-like receptor 9</fullName>
    </recommendedName>
    <cdAntigenName>CD289</cdAntigenName>
</protein>
<gene>
    <name type="primary">TLR9</name>
</gene>
<dbReference type="EMBL" id="AY859728">
    <property type="protein sequence ID" value="AAW50956.1"/>
    <property type="molecule type" value="mRNA"/>
</dbReference>
<dbReference type="RefSeq" id="NP_999123.2">
    <property type="nucleotide sequence ID" value="NM_213958.2"/>
</dbReference>
<dbReference type="SMR" id="Q5I2M3"/>
<dbReference type="FunCoup" id="Q5I2M3">
    <property type="interactions" value="99"/>
</dbReference>
<dbReference type="STRING" id="9823.ENSSSCP00000012188"/>
<dbReference type="GlyCosmos" id="Q5I2M3">
    <property type="glycosylation" value="11 sites, No reported glycans"/>
</dbReference>
<dbReference type="GlyGen" id="Q5I2M3">
    <property type="glycosylation" value="11 sites"/>
</dbReference>
<dbReference type="PaxDb" id="9823-ENSSSCP00000012188"/>
<dbReference type="Ensembl" id="ENSSSCT00000012516.5">
    <property type="protein sequence ID" value="ENSSSCP00000012188.2"/>
    <property type="gene ID" value="ENSSSCG00000011436.5"/>
</dbReference>
<dbReference type="Ensembl" id="ENSSSCT00015108303.1">
    <property type="protein sequence ID" value="ENSSSCP00015045894.1"/>
    <property type="gene ID" value="ENSSSCG00015079750.1"/>
</dbReference>
<dbReference type="Ensembl" id="ENSSSCT00025019535.1">
    <property type="protein sequence ID" value="ENSSSCP00025007918.1"/>
    <property type="gene ID" value="ENSSSCG00025014654.1"/>
</dbReference>
<dbReference type="Ensembl" id="ENSSSCT00030041455.1">
    <property type="protein sequence ID" value="ENSSSCP00030018844.1"/>
    <property type="gene ID" value="ENSSSCG00030029843.1"/>
</dbReference>
<dbReference type="Ensembl" id="ENSSSCT00035100877.1">
    <property type="protein sequence ID" value="ENSSSCP00035042886.1"/>
    <property type="gene ID" value="ENSSSCG00035074286.1"/>
</dbReference>
<dbReference type="Ensembl" id="ENSSSCT00040046162.1">
    <property type="protein sequence ID" value="ENSSSCP00040019360.1"/>
    <property type="gene ID" value="ENSSSCG00040034305.1"/>
</dbReference>
<dbReference type="Ensembl" id="ENSSSCT00055031924.1">
    <property type="protein sequence ID" value="ENSSSCP00055025414.1"/>
    <property type="gene ID" value="ENSSSCG00055016203.1"/>
</dbReference>
<dbReference type="Ensembl" id="ENSSSCT00060034526.1">
    <property type="protein sequence ID" value="ENSSSCP00060014780.1"/>
    <property type="gene ID" value="ENSSSCG00060025471.1"/>
</dbReference>
<dbReference type="Ensembl" id="ENSSSCT00065051391.1">
    <property type="protein sequence ID" value="ENSSSCP00065022310.1"/>
    <property type="gene ID" value="ENSSSCG00065037626.1"/>
</dbReference>
<dbReference type="Ensembl" id="ENSSSCT00105060104">
    <property type="protein sequence ID" value="ENSSSCP00105042433"/>
    <property type="gene ID" value="ENSSSCG00105031663"/>
</dbReference>
<dbReference type="Ensembl" id="ENSSSCT00110049308">
    <property type="protein sequence ID" value="ENSSSCP00110034680"/>
    <property type="gene ID" value="ENSSSCG00110025573"/>
</dbReference>
<dbReference type="Ensembl" id="ENSSSCT00115032006">
    <property type="protein sequence ID" value="ENSSSCP00115030427"/>
    <property type="gene ID" value="ENSSSCG00115018081"/>
</dbReference>
<dbReference type="Ensembl" id="ENSSSCT00130059881">
    <property type="protein sequence ID" value="ENSSSCP00130042912"/>
    <property type="gene ID" value="ENSSSCG00130030679"/>
</dbReference>
<dbReference type="GeneID" id="397007"/>
<dbReference type="VGNC" id="VGNC:111773">
    <property type="gene designation" value="TLR9"/>
</dbReference>
<dbReference type="eggNOG" id="KOG4641">
    <property type="taxonomic scope" value="Eukaryota"/>
</dbReference>
<dbReference type="GeneTree" id="ENSGT00940000162493"/>
<dbReference type="HOGENOM" id="CLU_006000_2_0_1"/>
<dbReference type="InParanoid" id="Q5I2M3"/>
<dbReference type="OMA" id="YNQNFCR"/>
<dbReference type="TreeFam" id="TF325595"/>
<dbReference type="Reactome" id="R-SSC-109704">
    <property type="pathway name" value="PI3K Cascade"/>
</dbReference>
<dbReference type="Reactome" id="R-SSC-1679131">
    <property type="pathway name" value="Trafficking and processing of endosomal TLR"/>
</dbReference>
<dbReference type="Reactome" id="R-SSC-168138">
    <property type="pathway name" value="Toll Like Receptor 9 (TLR9) Cascade"/>
</dbReference>
<dbReference type="Proteomes" id="UP000008227">
    <property type="component" value="Chromosome 13"/>
</dbReference>
<dbReference type="Proteomes" id="UP000314985">
    <property type="component" value="Unplaced"/>
</dbReference>
<dbReference type="Proteomes" id="UP000694570">
    <property type="component" value="Unplaced"/>
</dbReference>
<dbReference type="Proteomes" id="UP000694571">
    <property type="component" value="Unplaced"/>
</dbReference>
<dbReference type="Proteomes" id="UP000694720">
    <property type="component" value="Unplaced"/>
</dbReference>
<dbReference type="Proteomes" id="UP000694722">
    <property type="component" value="Unplaced"/>
</dbReference>
<dbReference type="Proteomes" id="UP000694723">
    <property type="component" value="Unplaced"/>
</dbReference>
<dbReference type="Proteomes" id="UP000694724">
    <property type="component" value="Unplaced"/>
</dbReference>
<dbReference type="Proteomes" id="UP000694725">
    <property type="component" value="Unplaced"/>
</dbReference>
<dbReference type="Proteomes" id="UP000694726">
    <property type="component" value="Unplaced"/>
</dbReference>
<dbReference type="Proteomes" id="UP000694727">
    <property type="component" value="Unplaced"/>
</dbReference>
<dbReference type="Proteomes" id="UP000694728">
    <property type="component" value="Unplaced"/>
</dbReference>
<dbReference type="Bgee" id="ENSSSCG00000011436">
    <property type="expression patterns" value="Expressed in spleen and 12 other cell types or tissues"/>
</dbReference>
<dbReference type="GO" id="GO:0016324">
    <property type="term" value="C:apical plasma membrane"/>
    <property type="evidence" value="ECO:0007669"/>
    <property type="project" value="Ensembl"/>
</dbReference>
<dbReference type="GO" id="GO:0016323">
    <property type="term" value="C:basolateral plasma membrane"/>
    <property type="evidence" value="ECO:0007669"/>
    <property type="project" value="Ensembl"/>
</dbReference>
<dbReference type="GO" id="GO:0031901">
    <property type="term" value="C:early endosome membrane"/>
    <property type="evidence" value="ECO:0007669"/>
    <property type="project" value="Ensembl"/>
</dbReference>
<dbReference type="GO" id="GO:0032009">
    <property type="term" value="C:early phagosome"/>
    <property type="evidence" value="ECO:0000250"/>
    <property type="project" value="UniProtKB"/>
</dbReference>
<dbReference type="GO" id="GO:0036019">
    <property type="term" value="C:endolysosome"/>
    <property type="evidence" value="ECO:0000250"/>
    <property type="project" value="UniProtKB"/>
</dbReference>
<dbReference type="GO" id="GO:0005783">
    <property type="term" value="C:endoplasmic reticulum"/>
    <property type="evidence" value="ECO:0000250"/>
    <property type="project" value="UniProtKB"/>
</dbReference>
<dbReference type="GO" id="GO:0005789">
    <property type="term" value="C:endoplasmic reticulum membrane"/>
    <property type="evidence" value="ECO:0007669"/>
    <property type="project" value="UniProtKB-SubCell"/>
</dbReference>
<dbReference type="GO" id="GO:0005768">
    <property type="term" value="C:endosome"/>
    <property type="evidence" value="ECO:0000250"/>
    <property type="project" value="UniProtKB"/>
</dbReference>
<dbReference type="GO" id="GO:0005764">
    <property type="term" value="C:lysosome"/>
    <property type="evidence" value="ECO:0000250"/>
    <property type="project" value="UniProtKB"/>
</dbReference>
<dbReference type="GO" id="GO:0005886">
    <property type="term" value="C:plasma membrane"/>
    <property type="evidence" value="ECO:0000318"/>
    <property type="project" value="GO_Central"/>
</dbReference>
<dbReference type="GO" id="GO:0005149">
    <property type="term" value="F:interleukin-1 receptor binding"/>
    <property type="evidence" value="ECO:0007669"/>
    <property type="project" value="Ensembl"/>
</dbReference>
<dbReference type="GO" id="GO:0038187">
    <property type="term" value="F:pattern recognition receptor activity"/>
    <property type="evidence" value="ECO:0000250"/>
    <property type="project" value="UniProtKB"/>
</dbReference>
<dbReference type="GO" id="GO:0042803">
    <property type="term" value="F:protein homodimerization activity"/>
    <property type="evidence" value="ECO:0000250"/>
    <property type="project" value="UniProtKB"/>
</dbReference>
<dbReference type="GO" id="GO:0035197">
    <property type="term" value="F:siRNA binding"/>
    <property type="evidence" value="ECO:0000250"/>
    <property type="project" value="UniProtKB"/>
</dbReference>
<dbReference type="GO" id="GO:0045322">
    <property type="term" value="F:unmethylated CpG binding"/>
    <property type="evidence" value="ECO:0000250"/>
    <property type="project" value="UniProtKB"/>
</dbReference>
<dbReference type="GO" id="GO:0007249">
    <property type="term" value="P:canonical NF-kappaB signal transduction"/>
    <property type="evidence" value="ECO:0000318"/>
    <property type="project" value="GO_Central"/>
</dbReference>
<dbReference type="GO" id="GO:1902350">
    <property type="term" value="P:cellular response to chloroquine"/>
    <property type="evidence" value="ECO:0007669"/>
    <property type="project" value="Ensembl"/>
</dbReference>
<dbReference type="GO" id="GO:0050829">
    <property type="term" value="P:defense response to Gram-negative bacterium"/>
    <property type="evidence" value="ECO:0007669"/>
    <property type="project" value="Ensembl"/>
</dbReference>
<dbReference type="GO" id="GO:0051607">
    <property type="term" value="P:defense response to virus"/>
    <property type="evidence" value="ECO:0000318"/>
    <property type="project" value="GO_Central"/>
</dbReference>
<dbReference type="GO" id="GO:0032490">
    <property type="term" value="P:detection of molecule of bacterial origin"/>
    <property type="evidence" value="ECO:0007669"/>
    <property type="project" value="Ensembl"/>
</dbReference>
<dbReference type="GO" id="GO:0006954">
    <property type="term" value="P:inflammatory response"/>
    <property type="evidence" value="ECO:0007669"/>
    <property type="project" value="UniProtKB-KW"/>
</dbReference>
<dbReference type="GO" id="GO:0045087">
    <property type="term" value="P:innate immune response"/>
    <property type="evidence" value="ECO:0007669"/>
    <property type="project" value="UniProtKB-KW"/>
</dbReference>
<dbReference type="GO" id="GO:0030277">
    <property type="term" value="P:maintenance of gastrointestinal epithelium"/>
    <property type="evidence" value="ECO:0007669"/>
    <property type="project" value="Ensembl"/>
</dbReference>
<dbReference type="GO" id="GO:0002755">
    <property type="term" value="P:MyD88-dependent toll-like receptor signaling pathway"/>
    <property type="evidence" value="ECO:0007669"/>
    <property type="project" value="Ensembl"/>
</dbReference>
<dbReference type="GO" id="GO:0070373">
    <property type="term" value="P:negative regulation of ERK1 and ERK2 cascade"/>
    <property type="evidence" value="ECO:0007669"/>
    <property type="project" value="Ensembl"/>
</dbReference>
<dbReference type="GO" id="GO:0050871">
    <property type="term" value="P:positive regulation of B cell activation"/>
    <property type="evidence" value="ECO:0000250"/>
    <property type="project" value="UniProtKB"/>
</dbReference>
<dbReference type="GO" id="GO:0030890">
    <property type="term" value="P:positive regulation of B cell proliferation"/>
    <property type="evidence" value="ECO:0000250"/>
    <property type="project" value="UniProtKB"/>
</dbReference>
<dbReference type="GO" id="GO:0043123">
    <property type="term" value="P:positive regulation of canonical NF-kappaB signal transduction"/>
    <property type="evidence" value="ECO:0007669"/>
    <property type="project" value="Ensembl"/>
</dbReference>
<dbReference type="GO" id="GO:0032722">
    <property type="term" value="P:positive regulation of chemokine production"/>
    <property type="evidence" value="ECO:0007669"/>
    <property type="project" value="Ensembl"/>
</dbReference>
<dbReference type="GO" id="GO:0032725">
    <property type="term" value="P:positive regulation of granulocyte macrophage colony-stimulating factor production"/>
    <property type="evidence" value="ECO:0007669"/>
    <property type="project" value="Ensembl"/>
</dbReference>
<dbReference type="GO" id="GO:0002639">
    <property type="term" value="P:positive regulation of immunoglobulin production"/>
    <property type="evidence" value="ECO:0000250"/>
    <property type="project" value="UniProtKB"/>
</dbReference>
<dbReference type="GO" id="GO:0032727">
    <property type="term" value="P:positive regulation of interferon-alpha production"/>
    <property type="evidence" value="ECO:0000250"/>
    <property type="project" value="UniProtKB"/>
</dbReference>
<dbReference type="GO" id="GO:0032728">
    <property type="term" value="P:positive regulation of interferon-beta production"/>
    <property type="evidence" value="ECO:0000250"/>
    <property type="project" value="UniProtKB"/>
</dbReference>
<dbReference type="GO" id="GO:0032733">
    <property type="term" value="P:positive regulation of interleukin-10 production"/>
    <property type="evidence" value="ECO:0007669"/>
    <property type="project" value="Ensembl"/>
</dbReference>
<dbReference type="GO" id="GO:0032735">
    <property type="term" value="P:positive regulation of interleukin-12 production"/>
    <property type="evidence" value="ECO:0007669"/>
    <property type="project" value="Ensembl"/>
</dbReference>
<dbReference type="GO" id="GO:0032741">
    <property type="term" value="P:positive regulation of interleukin-18 production"/>
    <property type="evidence" value="ECO:0007669"/>
    <property type="project" value="Ensembl"/>
</dbReference>
<dbReference type="GO" id="GO:0032755">
    <property type="term" value="P:positive regulation of interleukin-6 production"/>
    <property type="evidence" value="ECO:0000318"/>
    <property type="project" value="GO_Central"/>
</dbReference>
<dbReference type="GO" id="GO:0032757">
    <property type="term" value="P:positive regulation of interleukin-8 production"/>
    <property type="evidence" value="ECO:0007669"/>
    <property type="project" value="Ensembl"/>
</dbReference>
<dbReference type="GO" id="GO:1905300">
    <property type="term" value="P:positive regulation of intestinal epithelial cell development"/>
    <property type="evidence" value="ECO:0007669"/>
    <property type="project" value="Ensembl"/>
</dbReference>
<dbReference type="GO" id="GO:0046330">
    <property type="term" value="P:positive regulation of JNK cascade"/>
    <property type="evidence" value="ECO:0007669"/>
    <property type="project" value="Ensembl"/>
</dbReference>
<dbReference type="GO" id="GO:0043410">
    <property type="term" value="P:positive regulation of MAPK cascade"/>
    <property type="evidence" value="ECO:0000250"/>
    <property type="project" value="UniProtKB"/>
</dbReference>
<dbReference type="GO" id="GO:1901224">
    <property type="term" value="P:positive regulation of non-canonical NF-kappaB signal transduction"/>
    <property type="evidence" value="ECO:0007669"/>
    <property type="project" value="Ensembl"/>
</dbReference>
<dbReference type="GO" id="GO:0034165">
    <property type="term" value="P:positive regulation of toll-like receptor 9 signaling pathway"/>
    <property type="evidence" value="ECO:0000250"/>
    <property type="project" value="UniProtKB"/>
</dbReference>
<dbReference type="GO" id="GO:0045944">
    <property type="term" value="P:positive regulation of transcription by RNA polymerase II"/>
    <property type="evidence" value="ECO:0007669"/>
    <property type="project" value="Ensembl"/>
</dbReference>
<dbReference type="GO" id="GO:0032760">
    <property type="term" value="P:positive regulation of tumor necrosis factor production"/>
    <property type="evidence" value="ECO:0007669"/>
    <property type="project" value="Ensembl"/>
</dbReference>
<dbReference type="GO" id="GO:0032729">
    <property type="term" value="P:positive regulation of type II interferon production"/>
    <property type="evidence" value="ECO:0000250"/>
    <property type="project" value="UniProtKB"/>
</dbReference>
<dbReference type="GO" id="GO:0045577">
    <property type="term" value="P:regulation of B cell differentiation"/>
    <property type="evidence" value="ECO:0000250"/>
    <property type="project" value="UniProtKB"/>
</dbReference>
<dbReference type="GO" id="GO:0002730">
    <property type="term" value="P:regulation of dendritic cell cytokine production"/>
    <property type="evidence" value="ECO:0007669"/>
    <property type="project" value="Ensembl"/>
</dbReference>
<dbReference type="GO" id="GO:0050727">
    <property type="term" value="P:regulation of inflammatory response"/>
    <property type="evidence" value="ECO:0007669"/>
    <property type="project" value="Ensembl"/>
</dbReference>
<dbReference type="GO" id="GO:0034162">
    <property type="term" value="P:toll-like receptor 9 signaling pathway"/>
    <property type="evidence" value="ECO:0007669"/>
    <property type="project" value="Ensembl"/>
</dbReference>
<dbReference type="GO" id="GO:0002224">
    <property type="term" value="P:toll-like receptor signaling pathway"/>
    <property type="evidence" value="ECO:0000318"/>
    <property type="project" value="GO_Central"/>
</dbReference>
<dbReference type="FunFam" id="3.40.50.10140:FF:000003">
    <property type="entry name" value="Toll-like receptor 7"/>
    <property type="match status" value="1"/>
</dbReference>
<dbReference type="FunFam" id="3.80.10.10:FF:000037">
    <property type="entry name" value="Toll-like receptor 7"/>
    <property type="match status" value="1"/>
</dbReference>
<dbReference type="Gene3D" id="3.80.10.10">
    <property type="entry name" value="Ribonuclease Inhibitor"/>
    <property type="match status" value="1"/>
</dbReference>
<dbReference type="Gene3D" id="3.40.50.10140">
    <property type="entry name" value="Toll/interleukin-1 receptor homology (TIR) domain"/>
    <property type="match status" value="1"/>
</dbReference>
<dbReference type="InterPro" id="IPR001611">
    <property type="entry name" value="Leu-rich_rpt"/>
</dbReference>
<dbReference type="InterPro" id="IPR003591">
    <property type="entry name" value="Leu-rich_rpt_typical-subtyp"/>
</dbReference>
<dbReference type="InterPro" id="IPR041283">
    <property type="entry name" value="LRR_12"/>
</dbReference>
<dbReference type="InterPro" id="IPR032675">
    <property type="entry name" value="LRR_dom_sf"/>
</dbReference>
<dbReference type="InterPro" id="IPR000157">
    <property type="entry name" value="TIR_dom"/>
</dbReference>
<dbReference type="InterPro" id="IPR035897">
    <property type="entry name" value="Toll_tir_struct_dom_sf"/>
</dbReference>
<dbReference type="PANTHER" id="PTHR47410">
    <property type="entry name" value="TOLL-LIKE RECEPTOR 7-RELATED"/>
    <property type="match status" value="1"/>
</dbReference>
<dbReference type="PANTHER" id="PTHR47410:SF3">
    <property type="entry name" value="TOLL-LIKE RECEPTOR 9"/>
    <property type="match status" value="1"/>
</dbReference>
<dbReference type="Pfam" id="PF00560">
    <property type="entry name" value="LRR_1"/>
    <property type="match status" value="1"/>
</dbReference>
<dbReference type="Pfam" id="PF18837">
    <property type="entry name" value="LRR_12"/>
    <property type="match status" value="1"/>
</dbReference>
<dbReference type="Pfam" id="PF13855">
    <property type="entry name" value="LRR_8"/>
    <property type="match status" value="4"/>
</dbReference>
<dbReference type="Pfam" id="PF01582">
    <property type="entry name" value="TIR"/>
    <property type="match status" value="1"/>
</dbReference>
<dbReference type="PRINTS" id="PR00019">
    <property type="entry name" value="LEURICHRPT"/>
</dbReference>
<dbReference type="SMART" id="SM00364">
    <property type="entry name" value="LRR_BAC"/>
    <property type="match status" value="4"/>
</dbReference>
<dbReference type="SMART" id="SM00365">
    <property type="entry name" value="LRR_SD22"/>
    <property type="match status" value="7"/>
</dbReference>
<dbReference type="SMART" id="SM00369">
    <property type="entry name" value="LRR_TYP"/>
    <property type="match status" value="16"/>
</dbReference>
<dbReference type="SMART" id="SM00255">
    <property type="entry name" value="TIR"/>
    <property type="match status" value="1"/>
</dbReference>
<dbReference type="SUPFAM" id="SSF52058">
    <property type="entry name" value="L domain-like"/>
    <property type="match status" value="2"/>
</dbReference>
<dbReference type="SUPFAM" id="SSF52200">
    <property type="entry name" value="Toll/Interleukin receptor TIR domain"/>
    <property type="match status" value="1"/>
</dbReference>
<dbReference type="PROSITE" id="PS51450">
    <property type="entry name" value="LRR"/>
    <property type="match status" value="17"/>
</dbReference>
<dbReference type="PROSITE" id="PS50104">
    <property type="entry name" value="TIR"/>
    <property type="match status" value="1"/>
</dbReference>
<reference key="1">
    <citation type="submission" date="2004-12" db="EMBL/GenBank/DDBJ databases">
        <title>Sus scrofa toll-like receptor 9 mRNA.</title>
        <authorList>
            <person name="Brownlie R."/>
            <person name="Mookherjee N."/>
            <person name="Mutwiri G."/>
            <person name="Babiuk L."/>
            <person name="Hecker R."/>
            <person name="Lipford G."/>
            <person name="Griebel P."/>
        </authorList>
    </citation>
    <scope>NUCLEOTIDE SEQUENCE [MRNA]</scope>
    <source>
        <tissue>Spleen</tissue>
    </source>
</reference>
<evidence type="ECO:0000250" key="1">
    <source>
        <dbReference type="UniProtKB" id="Q2EEY0"/>
    </source>
</evidence>
<evidence type="ECO:0000250" key="2">
    <source>
        <dbReference type="UniProtKB" id="Q9EQU3"/>
    </source>
</evidence>
<evidence type="ECO:0000250" key="3">
    <source>
        <dbReference type="UniProtKB" id="Q9NR96"/>
    </source>
</evidence>
<evidence type="ECO:0000255" key="4"/>
<evidence type="ECO:0000255" key="5">
    <source>
        <dbReference type="PROSITE-ProRule" id="PRU00204"/>
    </source>
</evidence>
<evidence type="ECO:0000305" key="6"/>
<accession>Q5I2M3</accession>
<feature type="signal peptide" evidence="4">
    <location>
        <begin position="1"/>
        <end position="24"/>
    </location>
</feature>
<feature type="chain" id="PRO_0000227009" description="Toll-like receptor 9">
    <location>
        <begin position="25"/>
        <end position="1030"/>
    </location>
</feature>
<feature type="topological domain" description="Extracellular" evidence="4">
    <location>
        <begin position="25"/>
        <end position="816"/>
    </location>
</feature>
<feature type="transmembrane region" description="Helical" evidence="4">
    <location>
        <begin position="817"/>
        <end position="837"/>
    </location>
</feature>
<feature type="topological domain" description="Cytoplasmic" evidence="4">
    <location>
        <begin position="838"/>
        <end position="1030"/>
    </location>
</feature>
<feature type="repeat" description="LRR 1">
    <location>
        <begin position="61"/>
        <end position="84"/>
    </location>
</feature>
<feature type="repeat" description="LRR 2">
    <location>
        <begin position="86"/>
        <end position="109"/>
    </location>
</feature>
<feature type="repeat" description="LRR 3">
    <location>
        <begin position="121"/>
        <end position="146"/>
    </location>
</feature>
<feature type="repeat" description="LRR 4">
    <location>
        <begin position="149"/>
        <end position="165"/>
    </location>
</feature>
<feature type="repeat" description="LRR 5">
    <location>
        <begin position="166"/>
        <end position="189"/>
    </location>
</feature>
<feature type="repeat" description="LRR 6">
    <location>
        <begin position="197"/>
        <end position="220"/>
    </location>
</feature>
<feature type="repeat" description="LRR 7">
    <location>
        <begin position="222"/>
        <end position="241"/>
    </location>
</feature>
<feature type="repeat" description="LRR 8">
    <location>
        <begin position="242"/>
        <end position="267"/>
    </location>
</feature>
<feature type="repeat" description="LRR 9">
    <location>
        <begin position="282"/>
        <end position="305"/>
    </location>
</feature>
<feature type="repeat" description="LRR 10">
    <location>
        <begin position="307"/>
        <end position="331"/>
    </location>
</feature>
<feature type="repeat" description="LRR 11">
    <location>
        <begin position="332"/>
        <end position="355"/>
    </location>
</feature>
<feature type="repeat" description="LRR 12">
    <location>
        <begin position="362"/>
        <end position="385"/>
    </location>
</feature>
<feature type="repeat" description="LRR 13">
    <location>
        <begin position="389"/>
        <end position="412"/>
    </location>
</feature>
<feature type="repeat" description="LRR 14">
    <location>
        <begin position="414"/>
        <end position="439"/>
    </location>
</feature>
<feature type="repeat" description="LRR 15">
    <location>
        <begin position="469"/>
        <end position="493"/>
    </location>
</feature>
<feature type="repeat" description="LRR 16">
    <location>
        <begin position="495"/>
        <end position="518"/>
    </location>
</feature>
<feature type="repeat" description="LRR 17">
    <location>
        <begin position="519"/>
        <end position="542"/>
    </location>
</feature>
<feature type="repeat" description="LRR 18">
    <location>
        <begin position="544"/>
        <end position="571"/>
    </location>
</feature>
<feature type="repeat" description="LRR 19">
    <location>
        <begin position="573"/>
        <end position="597"/>
    </location>
</feature>
<feature type="repeat" description="LRR 20">
    <location>
        <begin position="599"/>
        <end position="621"/>
    </location>
</feature>
<feature type="repeat" description="LRR 21">
    <location>
        <begin position="626"/>
        <end position="649"/>
    </location>
</feature>
<feature type="repeat" description="LRR 22">
    <location>
        <begin position="651"/>
        <end position="674"/>
    </location>
</feature>
<feature type="repeat" description="LRR 23">
    <location>
        <begin position="675"/>
        <end position="698"/>
    </location>
</feature>
<feature type="repeat" description="LRR 24">
    <location>
        <begin position="700"/>
        <end position="722"/>
    </location>
</feature>
<feature type="repeat" description="LRR 25">
    <location>
        <begin position="723"/>
        <end position="746"/>
    </location>
</feature>
<feature type="repeat" description="LRR 26">
    <location>
        <begin position="748"/>
        <end position="771"/>
    </location>
</feature>
<feature type="domain" description="TIR" evidence="5">
    <location>
        <begin position="865"/>
        <end position="1010"/>
    </location>
</feature>
<feature type="binding site" evidence="1">
    <location>
        <begin position="46"/>
        <end position="50"/>
    </location>
    <ligand>
        <name>DNA</name>
        <dbReference type="ChEBI" id="CHEBI:16991"/>
        <note>CpG-containing DNA</note>
    </ligand>
</feature>
<feature type="binding site" evidence="1">
    <location>
        <begin position="71"/>
        <end position="76"/>
    </location>
    <ligand>
        <name>DNA</name>
        <dbReference type="ChEBI" id="CHEBI:16991"/>
        <note>CpG-containing DNA</note>
    </ligand>
</feature>
<feature type="binding site" evidence="1">
    <location>
        <begin position="94"/>
        <end position="108"/>
    </location>
    <ligand>
        <name>DNA</name>
        <dbReference type="ChEBI" id="CHEBI:16991"/>
        <note>CpG-containing DNA</note>
    </ligand>
</feature>
<feature type="binding site" evidence="1">
    <location>
        <position position="131"/>
    </location>
    <ligand>
        <name>DNA</name>
        <dbReference type="ChEBI" id="CHEBI:16991"/>
        <note>CpG-containing DNA</note>
    </ligand>
</feature>
<feature type="binding site" evidence="1">
    <location>
        <position position="151"/>
    </location>
    <ligand>
        <name>DNA</name>
        <dbReference type="ChEBI" id="CHEBI:16991"/>
        <note>CpG-containing DNA</note>
    </ligand>
</feature>
<feature type="binding site" evidence="1">
    <location>
        <begin position="178"/>
        <end position="180"/>
    </location>
    <ligand>
        <name>DNA</name>
        <dbReference type="ChEBI" id="CHEBI:16991"/>
        <note>CpG-containing DNA</note>
    </ligand>
</feature>
<feature type="binding site" evidence="1">
    <location>
        <position position="207"/>
    </location>
    <ligand>
        <name>DNA</name>
        <dbReference type="ChEBI" id="CHEBI:16991"/>
        <note>CpG-containing DNA</note>
    </ligand>
</feature>
<feature type="binding site" evidence="1">
    <location>
        <position position="261"/>
    </location>
    <ligand>
        <name>DNA</name>
        <dbReference type="ChEBI" id="CHEBI:16991"/>
        <note>CpG-containing DNA</note>
    </ligand>
</feature>
<feature type="lipid moiety-binding region" description="S-palmitoyl cysteine" evidence="3">
    <location>
        <position position="257"/>
    </location>
</feature>
<feature type="lipid moiety-binding region" description="S-palmitoyl cysteine" evidence="3">
    <location>
        <position position="264"/>
    </location>
</feature>
<feature type="glycosylation site" description="N-linked (GlcNAc...) asparagine" evidence="4">
    <location>
        <position position="63"/>
    </location>
</feature>
<feature type="glycosylation site" description="N-linked (GlcNAc...) asparagine" evidence="4">
    <location>
        <position position="128"/>
    </location>
</feature>
<feature type="glycosylation site" description="N-linked (GlcNAc...) asparagine" evidence="4">
    <location>
        <position position="199"/>
    </location>
</feature>
<feature type="glycosylation site" description="N-linked (GlcNAc...) asparagine" evidence="4">
    <location>
        <position position="209"/>
    </location>
</feature>
<feature type="glycosylation site" description="N-linked (GlcNAc...) asparagine" evidence="4">
    <location>
        <position position="241"/>
    </location>
</feature>
<feature type="glycosylation site" description="N-linked (GlcNAc...) asparagine" evidence="4">
    <location>
        <position position="339"/>
    </location>
</feature>
<feature type="glycosylation site" description="N-linked (GlcNAc...) asparagine" evidence="4">
    <location>
        <position position="512"/>
    </location>
</feature>
<feature type="glycosylation site" description="N-linked (GlcNAc...) asparagine" evidence="4">
    <location>
        <position position="566"/>
    </location>
</feature>
<feature type="glycosylation site" description="N-linked (GlcNAc...) asparagine" evidence="4">
    <location>
        <position position="668"/>
    </location>
</feature>
<feature type="glycosylation site" description="N-linked (GlcNAc...) asparagine" evidence="4">
    <location>
        <position position="693"/>
    </location>
</feature>
<feature type="glycosylation site" description="N-linked (GlcNAc...) asparagine" evidence="4">
    <location>
        <position position="730"/>
    </location>
</feature>
<feature type="disulfide bond" evidence="1">
    <location>
        <begin position="34"/>
        <end position="44"/>
    </location>
</feature>
<feature type="disulfide bond" evidence="1">
    <location>
        <begin position="97"/>
        <end position="109"/>
    </location>
</feature>
<feature type="disulfide bond" evidence="1">
    <location>
        <begin position="177"/>
        <end position="183"/>
    </location>
</feature>
<feature type="disulfide bond" evidence="1">
    <location>
        <begin position="254"/>
        <end position="267"/>
    </location>
</feature>
<feature type="disulfide bond" evidence="1">
    <location>
        <begin position="257"/>
        <end position="264"/>
    </location>
</feature>
<feature type="disulfide bond" evidence="1">
    <location>
        <begin position="469"/>
        <end position="499"/>
    </location>
</feature>
<feature type="disulfide bond" evidence="1">
    <location>
        <begin position="763"/>
        <end position="789"/>
    </location>
</feature>
<feature type="disulfide bond" evidence="1">
    <location>
        <begin position="765"/>
        <end position="808"/>
    </location>
</feature>
<name>TLR9_PIG</name>
<sequence>MGPRCTLHPLSLLVQVTALAAALAQGRLPAFLPCELQPHGLVNCNWLFLKSVPHFSAAAPRANVTSLSLLSNRIHHLHDSDFVHLSSLRTLNLKWNCPPAGLSPMHFPCHMTIEPNTFLAVPTLEELNLSYNSITTVPALPDSLVSLSLSRTNILVLDPTHLTGLHALRYLYMDGNCYYKNPCQGALEVVPGALLGLGNLTHLSLKYNNLTEVPRSLPPSLETLLLSYNHIVTLTPEDLANLTALRVLDVGGNCRRCDHARNPCRECPKDHPKLHSDTFSHLSRLEGLVLKDSSLYNLDTRWFRGLDRLQVLDLSENFLYDCITKTTAFQGLARLRSLNLSFNYHKKVSFAHLHLAPSFGHLRSLKELDMHGIFFRSLSETTLQPLVQLPMLQTLRLQMNFINQAQLSIFGAFPGLLYVDLSDNRISGAARPVAITREVDGRERVWLPSRNLAPRPLDTLRSEDFMPNCKAFSFTLDLSRNNLVTIQSEMFARLSRLECLRLSHNSISQAVNGSQFVPLTSLRVLDLSHNKLDLYHGRSFTELPRLEALDLSYNSQPFTMQGVGHNLSFVAQLPALRYLSLAHNDIHSRVSQQLCSASLCALDFSGNDLSRMWAEGDLYLRFFQGLRSLVWLDLSQNHLHTLLPRALDNLPKSLKHLHLRDNNLAFFNWSSLTLLPKLETLDLAGNQLKALSNGSLPSGTQLRRLDLSGNSIGFVNPGFFALAKQLEELNLSANALKTVEPSWFGSMVGNLKVLDVSANPLHCACGATFVGFLLEVQAAVPGLPSRVKCGSPGQLQGHSIFAQDLRLCLDETLSWNCFGISLLAMALGLVVPMLHHLCGWDLWYCFHLCLAWLPHRGQRRGADALFYDAFVVFDKAQSAVADWVYNELRVQLEERRGRRALRLCLEERDWLPGKTLFENLWASVYSSRKTLFVLAHTDRVSGLLRASFLLAQQRLLEDRKDVVVLVILRPDAYRSRYVRLRQRLCRQSVLLWPHQPRGQGSFWAQLGTALTRDNHHFYNRNFCRGPTTAE</sequence>